<protein>
    <recommendedName>
        <fullName evidence="1">RNA polymerase-binding protein RbpA</fullName>
    </recommendedName>
</protein>
<evidence type="ECO:0000255" key="1">
    <source>
        <dbReference type="HAMAP-Rule" id="MF_01483"/>
    </source>
</evidence>
<evidence type="ECO:0000269" key="2">
    <source>
    </source>
</evidence>
<evidence type="ECO:0000269" key="3">
    <source>
    </source>
</evidence>
<evidence type="ECO:0000269" key="4">
    <source>
    </source>
</evidence>
<evidence type="ECO:0000269" key="5">
    <source>
    </source>
</evidence>
<evidence type="ECO:0000305" key="6">
    <source>
    </source>
</evidence>
<evidence type="ECO:0007829" key="7">
    <source>
        <dbReference type="PDB" id="4X8K"/>
    </source>
</evidence>
<evidence type="ECO:0007829" key="8">
    <source>
        <dbReference type="PDB" id="6BZO"/>
    </source>
</evidence>
<evidence type="ECO:0007829" key="9">
    <source>
        <dbReference type="PDB" id="7KIF"/>
    </source>
</evidence>
<evidence type="ECO:0007829" key="10">
    <source>
        <dbReference type="PDB" id="7KIN"/>
    </source>
</evidence>
<sequence>MADRVLRGSRLGAVSYETDRNHDLAPRQIARYRTDNGEEFEVPFADDAEIPGTWLCRNGMEGTLIEGDLPEPKKVKPPRTHWDMLLERRSIEELEELLKERLELIRSRRRG</sequence>
<keyword id="KW-0002">3D-structure</keyword>
<keyword id="KW-1185">Reference proteome</keyword>
<keyword id="KW-0804">Transcription</keyword>
<keyword id="KW-0805">Transcription regulation</keyword>
<feature type="chain" id="PRO_0000423656" description="RNA polymerase-binding protein RbpA">
    <location>
        <begin position="1"/>
        <end position="111"/>
    </location>
</feature>
<feature type="region of interest" description="Not required for interaction with SigB">
    <location>
        <begin position="1"/>
        <end position="24"/>
    </location>
</feature>
<feature type="region of interest" description="Required for oligomerization and to complement a conditional disruption mutant">
    <location>
        <begin position="80"/>
        <end position="111"/>
    </location>
</feature>
<feature type="strand" evidence="10">
    <location>
        <begin position="6"/>
        <end position="9"/>
    </location>
</feature>
<feature type="strand" evidence="8">
    <location>
        <begin position="11"/>
        <end position="13"/>
    </location>
</feature>
<feature type="strand" evidence="10">
    <location>
        <begin position="21"/>
        <end position="23"/>
    </location>
</feature>
<feature type="strand" evidence="10">
    <location>
        <begin position="27"/>
        <end position="33"/>
    </location>
</feature>
<feature type="strand" evidence="9">
    <location>
        <begin position="35"/>
        <end position="37"/>
    </location>
</feature>
<feature type="strand" evidence="10">
    <location>
        <begin position="39"/>
        <end position="45"/>
    </location>
</feature>
<feature type="strand" evidence="10">
    <location>
        <begin position="52"/>
        <end position="55"/>
    </location>
</feature>
<feature type="strand" evidence="10">
    <location>
        <begin position="59"/>
        <end position="67"/>
    </location>
</feature>
<feature type="helix" evidence="7">
    <location>
        <begin position="81"/>
        <end position="88"/>
    </location>
</feature>
<feature type="helix" evidence="7">
    <location>
        <begin position="91"/>
        <end position="105"/>
    </location>
</feature>
<accession>P9WHJ5</accession>
<accession>L7N5Z6</accession>
<name>RBPA_MYCTU</name>
<reference key="1">
    <citation type="journal article" date="1998" name="Nature">
        <title>Deciphering the biology of Mycobacterium tuberculosis from the complete genome sequence.</title>
        <authorList>
            <person name="Cole S.T."/>
            <person name="Brosch R."/>
            <person name="Parkhill J."/>
            <person name="Garnier T."/>
            <person name="Churcher C.M."/>
            <person name="Harris D.E."/>
            <person name="Gordon S.V."/>
            <person name="Eiglmeier K."/>
            <person name="Gas S."/>
            <person name="Barry C.E. III"/>
            <person name="Tekaia F."/>
            <person name="Badcock K."/>
            <person name="Basham D."/>
            <person name="Brown D."/>
            <person name="Chillingworth T."/>
            <person name="Connor R."/>
            <person name="Davies R.M."/>
            <person name="Devlin K."/>
            <person name="Feltwell T."/>
            <person name="Gentles S."/>
            <person name="Hamlin N."/>
            <person name="Holroyd S."/>
            <person name="Hornsby T."/>
            <person name="Jagels K."/>
            <person name="Krogh A."/>
            <person name="McLean J."/>
            <person name="Moule S."/>
            <person name="Murphy L.D."/>
            <person name="Oliver S."/>
            <person name="Osborne J."/>
            <person name="Quail M.A."/>
            <person name="Rajandream M.A."/>
            <person name="Rogers J."/>
            <person name="Rutter S."/>
            <person name="Seeger K."/>
            <person name="Skelton S."/>
            <person name="Squares S."/>
            <person name="Squares R."/>
            <person name="Sulston J.E."/>
            <person name="Taylor K."/>
            <person name="Whitehead S."/>
            <person name="Barrell B.G."/>
        </authorList>
    </citation>
    <scope>NUCLEOTIDE SEQUENCE [LARGE SCALE GENOMIC DNA]</scope>
    <source>
        <strain>ATCC 25618 / H37Rv</strain>
    </source>
</reference>
<reference key="2">
    <citation type="journal article" date="2011" name="Mol. Cell. Proteomics">
        <title>Proteogenomic analysis of Mycobacterium tuberculosis by high resolution mass spectrometry.</title>
        <authorList>
            <person name="Kelkar D.S."/>
            <person name="Kumar D."/>
            <person name="Kumar P."/>
            <person name="Balakrishnan L."/>
            <person name="Muthusamy B."/>
            <person name="Yadav A.K."/>
            <person name="Shrivastava P."/>
            <person name="Marimuthu A."/>
            <person name="Anand S."/>
            <person name="Sundaram H."/>
            <person name="Kingsbury R."/>
            <person name="Harsha H.C."/>
            <person name="Nair B."/>
            <person name="Prasad T.S."/>
            <person name="Chauhan D.S."/>
            <person name="Katoch K."/>
            <person name="Katoch V.M."/>
            <person name="Kumar P."/>
            <person name="Chaerkady R."/>
            <person name="Ramachandran S."/>
            <person name="Dash D."/>
            <person name="Pandey A."/>
        </authorList>
    </citation>
    <scope>IDENTIFICATION BY MASS SPECTROMETRY [LARGE SCALE ANALYSIS]</scope>
    <source>
        <strain>ATCC 25618 / H37Rv</strain>
    </source>
</reference>
<reference key="3">
    <citation type="journal article" date="2011" name="Tuberculosis">
        <title>Isolation of conditional expression mutants in Mycobacterium tuberculosis by transposon mutagenesis.</title>
        <authorList>
            <person name="Forti F."/>
            <person name="Mauri V."/>
            <person name="Deho G."/>
            <person name="Ghisotti D."/>
        </authorList>
    </citation>
    <scope>DISRUPTION PHENOTYPE</scope>
    <source>
        <strain>ATCC 25618 / H37Rv</strain>
    </source>
</reference>
<reference key="4">
    <citation type="journal article" date="2012" name="Nucleic Acids Res.">
        <title>Mycobacterium tuberculosis RbpA protein is a new type of transcriptional activator that stabilizes the sigma A-containing RNA polymerase holoenzyme.</title>
        <authorList>
            <person name="Hu Y."/>
            <person name="Morichaud Z."/>
            <person name="Chen S."/>
            <person name="Leonetti J.P."/>
            <person name="Brodolin K."/>
        </authorList>
    </citation>
    <scope>FUNCTION</scope>
    <scope>INTERACTION WITH RPOB</scope>
    <scope>SUBUNIT</scope>
    <source>
        <strain>ATCC 25618 / H37Rv</strain>
    </source>
</reference>
<reference key="5">
    <citation type="journal article" date="2013" name="J. Biol. Chem.">
        <title>Mycobacterium tuberculosis RNA polymerase-binding protein A (RbpA) and its interactions with sigma factors.</title>
        <authorList>
            <person name="Bortoluzzi A."/>
            <person name="Muskett F.W."/>
            <person name="Waters L.C."/>
            <person name="Addis P.W."/>
            <person name="Rieck B."/>
            <person name="Munder T."/>
            <person name="Schleier S."/>
            <person name="Forti F."/>
            <person name="Ghisotti D."/>
            <person name="Carr M.D."/>
            <person name="O'Hare H.M."/>
        </authorList>
    </citation>
    <scope>STRUCTURE BY NMR OF 1-79</scope>
    <scope>INTERACTION WITH SIGB</scope>
    <scope>SUBUNIT</scope>
    <scope>BIOTECHNOLOGY</scope>
    <scope>DISRUPTION PHENOTYPE</scope>
    <source>
        <strain>ATCC 25618 / H37Rv</strain>
    </source>
</reference>
<reference key="6">
    <citation type="journal article" date="2013" name="Nucleic Acids Res.">
        <title>The actinobacterial transcription factor RbpA binds to the principal sigma subunit of RNA polymerase.</title>
        <authorList>
            <person name="Tabib-Salazar A."/>
            <person name="Liu B."/>
            <person name="Doughty P."/>
            <person name="Lewis R.A."/>
            <person name="Ghosh S."/>
            <person name="Parsy M.L."/>
            <person name="Simpson P.J."/>
            <person name="O'Dwyer K."/>
            <person name="Matthews S.J."/>
            <person name="Paget M.S."/>
        </authorList>
    </citation>
    <scope>STRUCTURE BY NMR OF 26-71</scope>
    <scope>SUBUNIT</scope>
</reference>
<gene>
    <name evidence="1" type="primary">rbpA</name>
    <name type="ordered locus">Rv2050</name>
</gene>
<comment type="function">
    <text evidence="3">Binds to RNA polymerase (RNAP), stimulating and stabilizing the formation of stable RNAP promoter complexes up to 2-fold from principal sigma factor SigA-dependent but not alternative sigma factor SigF-dependent promoters. Increases the affinity of core RNAP for SigA, increasing the transcriptional activity of RNAP. Unlike the case in M.smegmatis or S.coelicolor, has no effect on rifampicin inhibition of transcription. Has no effect on E.coli RNAP.</text>
</comment>
<comment type="subunit">
    <text evidence="3 4 5">Oligomerizes at more than 3 uM; this requires the C-terminal 32 residues. Forms a complex with the RNAP catalytic core, specifically with the beta subunit (rpoB). Interacts with free SigB, probably as a 1:1 complex, and also with free SigA, probably via its sigma-2 domain.</text>
</comment>
<comment type="disruption phenotype">
    <text evidence="2 4">Essential for growth, it cannot be disrupted.</text>
</comment>
<comment type="biotechnology">
    <text evidence="4">This protein is only found in actinomycetes; as it is essential in M.tuberculosis, it might make a potential drug target.</text>
</comment>
<comment type="similarity">
    <text evidence="1">Belongs to the RNA polymerase-binding protein RbpA family.</text>
</comment>
<comment type="caution">
    <text evidence="6">Unlike its ortholog in S.coelicolor, it is not seen to bind zinc.</text>
</comment>
<organism>
    <name type="scientific">Mycobacterium tuberculosis (strain ATCC 25618 / H37Rv)</name>
    <dbReference type="NCBI Taxonomy" id="83332"/>
    <lineage>
        <taxon>Bacteria</taxon>
        <taxon>Bacillati</taxon>
        <taxon>Actinomycetota</taxon>
        <taxon>Actinomycetes</taxon>
        <taxon>Mycobacteriales</taxon>
        <taxon>Mycobacteriaceae</taxon>
        <taxon>Mycobacterium</taxon>
        <taxon>Mycobacterium tuberculosis complex</taxon>
    </lineage>
</organism>
<proteinExistence type="evidence at protein level"/>
<dbReference type="EMBL" id="AL123456">
    <property type="protein sequence ID" value="CCP44823.1"/>
    <property type="molecule type" value="Genomic_DNA"/>
</dbReference>
<dbReference type="PIR" id="A70945">
    <property type="entry name" value="A70945"/>
</dbReference>
<dbReference type="RefSeq" id="NP_216566.1">
    <property type="nucleotide sequence ID" value="NC_000962.3"/>
</dbReference>
<dbReference type="RefSeq" id="WP_003410601.1">
    <property type="nucleotide sequence ID" value="NZ_NVQJ01000047.1"/>
</dbReference>
<dbReference type="PDB" id="2M4V">
    <property type="method" value="NMR"/>
    <property type="chains" value="A=1-79"/>
</dbReference>
<dbReference type="PDB" id="2M6P">
    <property type="method" value="NMR"/>
    <property type="chains" value="A=26-71"/>
</dbReference>
<dbReference type="PDB" id="4X8K">
    <property type="method" value="X-ray"/>
    <property type="resolution" value="2.20 A"/>
    <property type="chains" value="B=23-111"/>
</dbReference>
<dbReference type="PDB" id="6BZO">
    <property type="method" value="EM"/>
    <property type="resolution" value="3.38 A"/>
    <property type="chains" value="J=1-111"/>
</dbReference>
<dbReference type="PDB" id="6C04">
    <property type="method" value="EM"/>
    <property type="resolution" value="3.27 A"/>
    <property type="chains" value="J=1-111"/>
</dbReference>
<dbReference type="PDB" id="6C05">
    <property type="method" value="EM"/>
    <property type="resolution" value="5.15 A"/>
    <property type="chains" value="J=1-111"/>
</dbReference>
<dbReference type="PDB" id="6C06">
    <property type="method" value="EM"/>
    <property type="resolution" value="5.15 A"/>
    <property type="chains" value="J=1-111"/>
</dbReference>
<dbReference type="PDB" id="6EDT">
    <property type="method" value="EM"/>
    <property type="chains" value="J=1-111"/>
</dbReference>
<dbReference type="PDB" id="6EE8">
    <property type="method" value="EM"/>
    <property type="resolution" value="3.92 A"/>
    <property type="chains" value="J=1-111"/>
</dbReference>
<dbReference type="PDB" id="6EEC">
    <property type="method" value="EM"/>
    <property type="resolution" value="3.55 A"/>
    <property type="chains" value="J=1-111"/>
</dbReference>
<dbReference type="PDB" id="6M7J">
    <property type="method" value="EM"/>
    <property type="resolution" value="4.40 A"/>
    <property type="chains" value="J=1-111"/>
</dbReference>
<dbReference type="PDB" id="6VVX">
    <property type="method" value="EM"/>
    <property type="resolution" value="3.39 A"/>
    <property type="chains" value="J=1-111"/>
</dbReference>
<dbReference type="PDB" id="6VVY">
    <property type="method" value="EM"/>
    <property type="resolution" value="3.42 A"/>
    <property type="chains" value="J=1-111"/>
</dbReference>
<dbReference type="PDB" id="6VVZ">
    <property type="method" value="EM"/>
    <property type="resolution" value="3.72 A"/>
    <property type="chains" value="J=1-111"/>
</dbReference>
<dbReference type="PDB" id="6VW0">
    <property type="method" value="EM"/>
    <property type="resolution" value="3.59 A"/>
    <property type="chains" value="J=1-111"/>
</dbReference>
<dbReference type="PDB" id="7KIF">
    <property type="method" value="EM"/>
    <property type="resolution" value="2.94 A"/>
    <property type="chains" value="J=1-111"/>
</dbReference>
<dbReference type="PDB" id="7KIM">
    <property type="method" value="EM"/>
    <property type="resolution" value="3.38 A"/>
    <property type="chains" value="J=1-111"/>
</dbReference>
<dbReference type="PDB" id="7KIN">
    <property type="method" value="EM"/>
    <property type="resolution" value="2.74 A"/>
    <property type="chains" value="J=1-111"/>
</dbReference>
<dbReference type="PDBsum" id="2M4V"/>
<dbReference type="PDBsum" id="2M6P"/>
<dbReference type="PDBsum" id="4X8K"/>
<dbReference type="PDBsum" id="6BZO"/>
<dbReference type="PDBsum" id="6C04"/>
<dbReference type="PDBsum" id="6C05"/>
<dbReference type="PDBsum" id="6C06"/>
<dbReference type="PDBsum" id="6EDT"/>
<dbReference type="PDBsum" id="6EE8"/>
<dbReference type="PDBsum" id="6EEC"/>
<dbReference type="PDBsum" id="6M7J"/>
<dbReference type="PDBsum" id="6VVX"/>
<dbReference type="PDBsum" id="6VVY"/>
<dbReference type="PDBsum" id="6VVZ"/>
<dbReference type="PDBsum" id="6VW0"/>
<dbReference type="PDBsum" id="7KIF"/>
<dbReference type="PDBsum" id="7KIM"/>
<dbReference type="PDBsum" id="7KIN"/>
<dbReference type="BMRB" id="P9WHJ5"/>
<dbReference type="SMR" id="P9WHJ5"/>
<dbReference type="FunCoup" id="P9WHJ5">
    <property type="interactions" value="5"/>
</dbReference>
<dbReference type="IntAct" id="P9WHJ5">
    <property type="interactions" value="6"/>
</dbReference>
<dbReference type="STRING" id="83332.Rv2050"/>
<dbReference type="PaxDb" id="83332-Rv2050"/>
<dbReference type="DNASU" id="888598"/>
<dbReference type="GeneID" id="45426029"/>
<dbReference type="GeneID" id="888598"/>
<dbReference type="KEGG" id="mtu:Rv2050"/>
<dbReference type="KEGG" id="mtv:RVBD_2050"/>
<dbReference type="TubercuList" id="Rv2050"/>
<dbReference type="eggNOG" id="ENOG5031DSU">
    <property type="taxonomic scope" value="Bacteria"/>
</dbReference>
<dbReference type="InParanoid" id="P9WHJ5"/>
<dbReference type="OrthoDB" id="3618415at2"/>
<dbReference type="PhylomeDB" id="P9WHJ5"/>
<dbReference type="Proteomes" id="UP000001584">
    <property type="component" value="Chromosome"/>
</dbReference>
<dbReference type="GO" id="GO:0009274">
    <property type="term" value="C:peptidoglycan-based cell wall"/>
    <property type="evidence" value="ECO:0007005"/>
    <property type="project" value="MTBBASE"/>
</dbReference>
<dbReference type="GO" id="GO:0001000">
    <property type="term" value="F:bacterial-type RNA polymerase core enzyme binding"/>
    <property type="evidence" value="ECO:0007669"/>
    <property type="project" value="UniProtKB-UniRule"/>
</dbReference>
<dbReference type="GO" id="GO:0001108">
    <property type="term" value="F:bacterial-type RNA polymerase holo enzyme binding"/>
    <property type="evidence" value="ECO:0000314"/>
    <property type="project" value="UniProtKB"/>
</dbReference>
<dbReference type="GO" id="GO:0003676">
    <property type="term" value="F:nucleic acid binding"/>
    <property type="evidence" value="ECO:0000269"/>
    <property type="project" value="DisProt"/>
</dbReference>
<dbReference type="GO" id="GO:0045893">
    <property type="term" value="P:positive regulation of DNA-templated transcription"/>
    <property type="evidence" value="ECO:0000314"/>
    <property type="project" value="UniProtKB"/>
</dbReference>
<dbReference type="DisProt" id="DP00791"/>
<dbReference type="FunFam" id="2.20.28.270:FF:000001">
    <property type="entry name" value="RNA polymerase-binding protein RbpA"/>
    <property type="match status" value="1"/>
</dbReference>
<dbReference type="Gene3D" id="2.20.28.270">
    <property type="entry name" value="RNA polymerase-binding protein A"/>
    <property type="match status" value="1"/>
</dbReference>
<dbReference type="HAMAP" id="MF_01483">
    <property type="entry name" value="RbpA"/>
    <property type="match status" value="1"/>
</dbReference>
<dbReference type="InterPro" id="IPR038638">
    <property type="entry name" value="RbpA_sf"/>
</dbReference>
<dbReference type="InterPro" id="IPR025182">
    <property type="entry name" value="RNApol-bd_RbpA"/>
</dbReference>
<dbReference type="Pfam" id="PF13397">
    <property type="entry name" value="RbpA"/>
    <property type="match status" value="1"/>
</dbReference>